<dbReference type="EMBL" id="CR855204">
    <property type="protein sequence ID" value="CAH67467.1"/>
    <property type="molecule type" value="Genomic_DNA"/>
</dbReference>
<dbReference type="EMBL" id="CM000129">
    <property type="protein sequence ID" value="EAY94971.1"/>
    <property type="molecule type" value="Genomic_DNA"/>
</dbReference>
<dbReference type="STRING" id="39946.Q01IH3"/>
<dbReference type="EnsemblPlants" id="BGIOSGA016829-TA">
    <property type="protein sequence ID" value="BGIOSGA016829-PA"/>
    <property type="gene ID" value="BGIOSGA016829"/>
</dbReference>
<dbReference type="EnsemblPlants" id="OsGoSa_04g0020830.01">
    <property type="protein sequence ID" value="OsGoSa_04g0020830.01"/>
    <property type="gene ID" value="OsGoSa_04g0020830"/>
</dbReference>
<dbReference type="EnsemblPlants" id="OsIR64_04g0020410.01">
    <property type="protein sequence ID" value="OsIR64_04g0020410.01"/>
    <property type="gene ID" value="OsIR64_04g0020410"/>
</dbReference>
<dbReference type="EnsemblPlants" id="OsKYG_04g0020750.01">
    <property type="protein sequence ID" value="OsKYG_04g0020750.01"/>
    <property type="gene ID" value="OsKYG_04g0020750"/>
</dbReference>
<dbReference type="EnsemblPlants" id="OsLaMu_04g0021420.01">
    <property type="protein sequence ID" value="OsLaMu_04g0021420.01"/>
    <property type="gene ID" value="OsLaMu_04g0021420"/>
</dbReference>
<dbReference type="EnsemblPlants" id="OsLima_04g0020920.01">
    <property type="protein sequence ID" value="OsLima_04g0020920.01"/>
    <property type="gene ID" value="OsLima_04g0020920"/>
</dbReference>
<dbReference type="EnsemblPlants" id="OsLiXu_04g0021250.01">
    <property type="protein sequence ID" value="OsLiXu_04g0021250.01"/>
    <property type="gene ID" value="OsLiXu_04g0021250"/>
</dbReference>
<dbReference type="EnsemblPlants" id="OsMH63_04G021760_01">
    <property type="protein sequence ID" value="OsMH63_04G021760_01"/>
    <property type="gene ID" value="OsMH63_04G021760"/>
</dbReference>
<dbReference type="EnsemblPlants" id="OsPr106_04g0021610.01">
    <property type="protein sequence ID" value="OsPr106_04g0021610.01"/>
    <property type="gene ID" value="OsPr106_04g0021610"/>
</dbReference>
<dbReference type="EnsemblPlants" id="OsZS97_04G021780_01">
    <property type="protein sequence ID" value="OsZS97_04G021780_01"/>
    <property type="gene ID" value="OsZS97_04G021780"/>
</dbReference>
<dbReference type="Gramene" id="BGIOSGA016829-TA">
    <property type="protein sequence ID" value="BGIOSGA016829-PA"/>
    <property type="gene ID" value="BGIOSGA016829"/>
</dbReference>
<dbReference type="Gramene" id="OsGoSa_04g0020830.01">
    <property type="protein sequence ID" value="OsGoSa_04g0020830.01"/>
    <property type="gene ID" value="OsGoSa_04g0020830"/>
</dbReference>
<dbReference type="Gramene" id="OsIR64_04g0020410.01">
    <property type="protein sequence ID" value="OsIR64_04g0020410.01"/>
    <property type="gene ID" value="OsIR64_04g0020410"/>
</dbReference>
<dbReference type="Gramene" id="OsKYG_04g0020750.01">
    <property type="protein sequence ID" value="OsKYG_04g0020750.01"/>
    <property type="gene ID" value="OsKYG_04g0020750"/>
</dbReference>
<dbReference type="Gramene" id="OsLaMu_04g0021420.01">
    <property type="protein sequence ID" value="OsLaMu_04g0021420.01"/>
    <property type="gene ID" value="OsLaMu_04g0021420"/>
</dbReference>
<dbReference type="Gramene" id="OsLima_04g0020920.01">
    <property type="protein sequence ID" value="OsLima_04g0020920.01"/>
    <property type="gene ID" value="OsLima_04g0020920"/>
</dbReference>
<dbReference type="Gramene" id="OsLiXu_04g0021250.01">
    <property type="protein sequence ID" value="OsLiXu_04g0021250.01"/>
    <property type="gene ID" value="OsLiXu_04g0021250"/>
</dbReference>
<dbReference type="Gramene" id="OsMH63_04G021760_01">
    <property type="protein sequence ID" value="OsMH63_04G021760_01"/>
    <property type="gene ID" value="OsMH63_04G021760"/>
</dbReference>
<dbReference type="Gramene" id="OsPr106_04g0021610.01">
    <property type="protein sequence ID" value="OsPr106_04g0021610.01"/>
    <property type="gene ID" value="OsPr106_04g0021610"/>
</dbReference>
<dbReference type="Gramene" id="OsZS97_04G021780_01">
    <property type="protein sequence ID" value="OsZS97_04G021780_01"/>
    <property type="gene ID" value="OsZS97_04G021780"/>
</dbReference>
<dbReference type="HOGENOM" id="CLU_080291_0_0_1"/>
<dbReference type="OMA" id="LVHWHVE"/>
<dbReference type="OrthoDB" id="411017at2759"/>
<dbReference type="Proteomes" id="UP000007015">
    <property type="component" value="Chromosome 4"/>
</dbReference>
<dbReference type="GO" id="GO:0005778">
    <property type="term" value="C:peroxisomal membrane"/>
    <property type="evidence" value="ECO:0007669"/>
    <property type="project" value="UniProtKB-SubCell"/>
</dbReference>
<dbReference type="GO" id="GO:0042802">
    <property type="term" value="F:identical protein binding"/>
    <property type="evidence" value="ECO:0007669"/>
    <property type="project" value="EnsemblPlants"/>
</dbReference>
<dbReference type="GO" id="GO:0016559">
    <property type="term" value="P:peroxisome fission"/>
    <property type="evidence" value="ECO:0007669"/>
    <property type="project" value="EnsemblPlants"/>
</dbReference>
<dbReference type="GO" id="GO:0044375">
    <property type="term" value="P:regulation of peroxisome size"/>
    <property type="evidence" value="ECO:0007669"/>
    <property type="project" value="EnsemblPlants"/>
</dbReference>
<dbReference type="InterPro" id="IPR008733">
    <property type="entry name" value="PEX11"/>
</dbReference>
<dbReference type="PANTHER" id="PTHR12652">
    <property type="entry name" value="PEROXISOMAL BIOGENESIS FACTOR 11"/>
    <property type="match status" value="1"/>
</dbReference>
<dbReference type="PANTHER" id="PTHR12652:SF17">
    <property type="entry name" value="PEROXISOMAL MEMBRANE PROTEIN 11B"/>
    <property type="match status" value="1"/>
</dbReference>
<dbReference type="Pfam" id="PF05648">
    <property type="entry name" value="PEX11"/>
    <property type="match status" value="1"/>
</dbReference>
<feature type="chain" id="PRO_0000330304" description="Peroxisomal membrane protein 11-4">
    <location>
        <begin position="1"/>
        <end position="222"/>
    </location>
</feature>
<feature type="topological domain" description="Cytoplasmic" evidence="2">
    <location>
        <begin position="1"/>
        <end position="81"/>
    </location>
</feature>
<feature type="transmembrane region" description="Helical" evidence="2">
    <location>
        <begin position="82"/>
        <end position="102"/>
    </location>
</feature>
<feature type="topological domain" description="Lumenal" evidence="2">
    <location>
        <begin position="103"/>
        <end position="196"/>
    </location>
</feature>
<feature type="transmembrane region" description="Helical" evidence="2">
    <location>
        <begin position="197"/>
        <end position="217"/>
    </location>
</feature>
<feature type="topological domain" description="Cytoplasmic" evidence="2">
    <location>
        <begin position="218"/>
        <end position="222"/>
    </location>
</feature>
<name>PX114_ORYSI</name>
<sequence>MSAGDTLDKLVVFLAKRDGIDKLVKTFQYVSKLAHWAAESSSPGLAGRAKNWETSAGLSRKAFRTGRFLTGLNGLRRAPGEFGALAVLANAGEMVYFFFDHFTWLSRVGVLDAWLARRMSFISAFGESVGYVFFIAMDLIMIRRGLRQERKLLREGGKDKDKEVKKIRMDRVMRLMATAANVADLVIGIADIEPNPFCNHAVTLGISGLVSAWAGWYRNWPS</sequence>
<protein>
    <recommendedName>
        <fullName>Peroxisomal membrane protein 11-4</fullName>
    </recommendedName>
    <alternativeName>
        <fullName>OsPEX11-4</fullName>
    </alternativeName>
    <alternativeName>
        <fullName>Peroxin-11-4</fullName>
    </alternativeName>
</protein>
<accession>Q01IH3</accession>
<accession>A2XVW1</accession>
<keyword id="KW-0472">Membrane</keyword>
<keyword id="KW-0576">Peroxisome</keyword>
<keyword id="KW-0962">Peroxisome biogenesis</keyword>
<keyword id="KW-1185">Reference proteome</keyword>
<keyword id="KW-0812">Transmembrane</keyword>
<keyword id="KW-1133">Transmembrane helix</keyword>
<organism>
    <name type="scientific">Oryza sativa subsp. indica</name>
    <name type="common">Rice</name>
    <dbReference type="NCBI Taxonomy" id="39946"/>
    <lineage>
        <taxon>Eukaryota</taxon>
        <taxon>Viridiplantae</taxon>
        <taxon>Streptophyta</taxon>
        <taxon>Embryophyta</taxon>
        <taxon>Tracheophyta</taxon>
        <taxon>Spermatophyta</taxon>
        <taxon>Magnoliopsida</taxon>
        <taxon>Liliopsida</taxon>
        <taxon>Poales</taxon>
        <taxon>Poaceae</taxon>
        <taxon>BOP clade</taxon>
        <taxon>Oryzoideae</taxon>
        <taxon>Oryzeae</taxon>
        <taxon>Oryzinae</taxon>
        <taxon>Oryza</taxon>
        <taxon>Oryza sativa</taxon>
    </lineage>
</organism>
<proteinExistence type="evidence at transcript level"/>
<gene>
    <name type="primary">PEX11-4</name>
    <name type="ORF">OsI_016204</name>
    <name type="ORF">OSIGBa0159I10.12</name>
</gene>
<evidence type="ECO:0000250" key="1"/>
<evidence type="ECO:0000255" key="2"/>
<evidence type="ECO:0000269" key="3">
    <source>
    </source>
</evidence>
<evidence type="ECO:0000305" key="4"/>
<reference key="1">
    <citation type="journal article" date="2002" name="Nature">
        <title>Sequence and analysis of rice chromosome 4.</title>
        <authorList>
            <person name="Feng Q."/>
            <person name="Zhang Y."/>
            <person name="Hao P."/>
            <person name="Wang S."/>
            <person name="Fu G."/>
            <person name="Huang Y."/>
            <person name="Li Y."/>
            <person name="Zhu J."/>
            <person name="Liu Y."/>
            <person name="Hu X."/>
            <person name="Jia P."/>
            <person name="Zhang Y."/>
            <person name="Zhao Q."/>
            <person name="Ying K."/>
            <person name="Yu S."/>
            <person name="Tang Y."/>
            <person name="Weng Q."/>
            <person name="Zhang L."/>
            <person name="Lu Y."/>
            <person name="Mu J."/>
            <person name="Lu Y."/>
            <person name="Zhang L.S."/>
            <person name="Yu Z."/>
            <person name="Fan D."/>
            <person name="Liu X."/>
            <person name="Lu T."/>
            <person name="Li C."/>
            <person name="Wu Y."/>
            <person name="Sun T."/>
            <person name="Lei H."/>
            <person name="Li T."/>
            <person name="Hu H."/>
            <person name="Guan J."/>
            <person name="Wu M."/>
            <person name="Zhang R."/>
            <person name="Zhou B."/>
            <person name="Chen Z."/>
            <person name="Chen L."/>
            <person name="Jin Z."/>
            <person name="Wang R."/>
            <person name="Yin H."/>
            <person name="Cai Z."/>
            <person name="Ren S."/>
            <person name="Lv G."/>
            <person name="Gu W."/>
            <person name="Zhu G."/>
            <person name="Tu Y."/>
            <person name="Jia J."/>
            <person name="Zhang Y."/>
            <person name="Chen J."/>
            <person name="Kang H."/>
            <person name="Chen X."/>
            <person name="Shao C."/>
            <person name="Sun Y."/>
            <person name="Hu Q."/>
            <person name="Zhang X."/>
            <person name="Zhang W."/>
            <person name="Wang L."/>
            <person name="Ding C."/>
            <person name="Sheng H."/>
            <person name="Gu J."/>
            <person name="Chen S."/>
            <person name="Ni L."/>
            <person name="Zhu F."/>
            <person name="Chen W."/>
            <person name="Lan L."/>
            <person name="Lai Y."/>
            <person name="Cheng Z."/>
            <person name="Gu M."/>
            <person name="Jiang J."/>
            <person name="Li J."/>
            <person name="Hong G."/>
            <person name="Xue Y."/>
            <person name="Han B."/>
        </authorList>
    </citation>
    <scope>NUCLEOTIDE SEQUENCE [LARGE SCALE GENOMIC DNA]</scope>
    <source>
        <strain>cv. Guang-Lu-Ai No.4</strain>
    </source>
</reference>
<reference key="2">
    <citation type="journal article" date="2005" name="PLoS Biol.">
        <title>The genomes of Oryza sativa: a history of duplications.</title>
        <authorList>
            <person name="Yu J."/>
            <person name="Wang J."/>
            <person name="Lin W."/>
            <person name="Li S."/>
            <person name="Li H."/>
            <person name="Zhou J."/>
            <person name="Ni P."/>
            <person name="Dong W."/>
            <person name="Hu S."/>
            <person name="Zeng C."/>
            <person name="Zhang J."/>
            <person name="Zhang Y."/>
            <person name="Li R."/>
            <person name="Xu Z."/>
            <person name="Li S."/>
            <person name="Li X."/>
            <person name="Zheng H."/>
            <person name="Cong L."/>
            <person name="Lin L."/>
            <person name="Yin J."/>
            <person name="Geng J."/>
            <person name="Li G."/>
            <person name="Shi J."/>
            <person name="Liu J."/>
            <person name="Lv H."/>
            <person name="Li J."/>
            <person name="Wang J."/>
            <person name="Deng Y."/>
            <person name="Ran L."/>
            <person name="Shi X."/>
            <person name="Wang X."/>
            <person name="Wu Q."/>
            <person name="Li C."/>
            <person name="Ren X."/>
            <person name="Wang J."/>
            <person name="Wang X."/>
            <person name="Li D."/>
            <person name="Liu D."/>
            <person name="Zhang X."/>
            <person name="Ji Z."/>
            <person name="Zhao W."/>
            <person name="Sun Y."/>
            <person name="Zhang Z."/>
            <person name="Bao J."/>
            <person name="Han Y."/>
            <person name="Dong L."/>
            <person name="Ji J."/>
            <person name="Chen P."/>
            <person name="Wu S."/>
            <person name="Liu J."/>
            <person name="Xiao Y."/>
            <person name="Bu D."/>
            <person name="Tan J."/>
            <person name="Yang L."/>
            <person name="Ye C."/>
            <person name="Zhang J."/>
            <person name="Xu J."/>
            <person name="Zhou Y."/>
            <person name="Yu Y."/>
            <person name="Zhang B."/>
            <person name="Zhuang S."/>
            <person name="Wei H."/>
            <person name="Liu B."/>
            <person name="Lei M."/>
            <person name="Yu H."/>
            <person name="Li Y."/>
            <person name="Xu H."/>
            <person name="Wei S."/>
            <person name="He X."/>
            <person name="Fang L."/>
            <person name="Zhang Z."/>
            <person name="Zhang Y."/>
            <person name="Huang X."/>
            <person name="Su Z."/>
            <person name="Tong W."/>
            <person name="Li J."/>
            <person name="Tong Z."/>
            <person name="Li S."/>
            <person name="Ye J."/>
            <person name="Wang L."/>
            <person name="Fang L."/>
            <person name="Lei T."/>
            <person name="Chen C.-S."/>
            <person name="Chen H.-C."/>
            <person name="Xu Z."/>
            <person name="Li H."/>
            <person name="Huang H."/>
            <person name="Zhang F."/>
            <person name="Xu H."/>
            <person name="Li N."/>
            <person name="Zhao C."/>
            <person name="Li S."/>
            <person name="Dong L."/>
            <person name="Huang Y."/>
            <person name="Li L."/>
            <person name="Xi Y."/>
            <person name="Qi Q."/>
            <person name="Li W."/>
            <person name="Zhang B."/>
            <person name="Hu W."/>
            <person name="Zhang Y."/>
            <person name="Tian X."/>
            <person name="Jiao Y."/>
            <person name="Liang X."/>
            <person name="Jin J."/>
            <person name="Gao L."/>
            <person name="Zheng W."/>
            <person name="Hao B."/>
            <person name="Liu S.-M."/>
            <person name="Wang W."/>
            <person name="Yuan L."/>
            <person name="Cao M."/>
            <person name="McDermott J."/>
            <person name="Samudrala R."/>
            <person name="Wang J."/>
            <person name="Wong G.K.-S."/>
            <person name="Yang H."/>
        </authorList>
    </citation>
    <scope>NUCLEOTIDE SEQUENCE [LARGE SCALE GENOMIC DNA]</scope>
    <source>
        <strain>cv. 93-11</strain>
    </source>
</reference>
<reference key="3">
    <citation type="journal article" date="2008" name="Gene">
        <title>Comprehensive sequence and expression profile analysis of PEX11 gene family in rice.</title>
        <authorList>
            <person name="Nayidu N.K."/>
            <person name="Wang L."/>
            <person name="Xie W."/>
            <person name="Zhang C."/>
            <person name="Fan C."/>
            <person name="Lian X."/>
            <person name="Zhang Q."/>
            <person name="Xiong L."/>
        </authorList>
    </citation>
    <scope>TISSUE SPECIFICITY</scope>
    <scope>INDUCTION</scope>
    <scope>GENE FAMILY</scope>
    <scope>NOMENCLATURE</scope>
</reference>
<comment type="function">
    <text evidence="1">Involved in peroxisomal proliferation.</text>
</comment>
<comment type="subcellular location">
    <subcellularLocation>
        <location evidence="1">Peroxisome membrane</location>
        <topology evidence="1">Multi-pass membrane protein</topology>
    </subcellularLocation>
</comment>
<comment type="tissue specificity">
    <text evidence="3">Expressed in seedlings, shoots, leaf sheaths and flag leaf.</text>
</comment>
<comment type="induction">
    <text evidence="3">By abscisic acid, H(2)O(2) and nitrogen deprivation. Down-regulated by salt stress.</text>
</comment>
<comment type="similarity">
    <text evidence="4">Belongs to the peroxin-11 family.</text>
</comment>